<comment type="function">
    <text evidence="1">Nucleoside triphosphate pyrophosphatase. May have a dual role in cell division arrest and in preventing the incorporation of modified nucleotides into cellular nucleic acids.</text>
</comment>
<comment type="catalytic activity">
    <reaction evidence="1">
        <text>a ribonucleoside 5'-triphosphate + H2O = a ribonucleoside 5'-phosphate + diphosphate + H(+)</text>
        <dbReference type="Rhea" id="RHEA:23996"/>
        <dbReference type="ChEBI" id="CHEBI:15377"/>
        <dbReference type="ChEBI" id="CHEBI:15378"/>
        <dbReference type="ChEBI" id="CHEBI:33019"/>
        <dbReference type="ChEBI" id="CHEBI:58043"/>
        <dbReference type="ChEBI" id="CHEBI:61557"/>
        <dbReference type="EC" id="3.6.1.9"/>
    </reaction>
</comment>
<comment type="catalytic activity">
    <reaction evidence="1">
        <text>a 2'-deoxyribonucleoside 5'-triphosphate + H2O = a 2'-deoxyribonucleoside 5'-phosphate + diphosphate + H(+)</text>
        <dbReference type="Rhea" id="RHEA:44644"/>
        <dbReference type="ChEBI" id="CHEBI:15377"/>
        <dbReference type="ChEBI" id="CHEBI:15378"/>
        <dbReference type="ChEBI" id="CHEBI:33019"/>
        <dbReference type="ChEBI" id="CHEBI:61560"/>
        <dbReference type="ChEBI" id="CHEBI:65317"/>
        <dbReference type="EC" id="3.6.1.9"/>
    </reaction>
</comment>
<comment type="cofactor">
    <cofactor evidence="1">
        <name>a divalent metal cation</name>
        <dbReference type="ChEBI" id="CHEBI:60240"/>
    </cofactor>
</comment>
<comment type="subcellular location">
    <subcellularLocation>
        <location evidence="1">Cytoplasm</location>
    </subcellularLocation>
</comment>
<comment type="similarity">
    <text evidence="1">Belongs to the Maf family.</text>
</comment>
<name>NTPP_NOSP7</name>
<proteinExistence type="inferred from homology"/>
<organism>
    <name type="scientific">Nostoc punctiforme (strain ATCC 29133 / PCC 73102)</name>
    <dbReference type="NCBI Taxonomy" id="63737"/>
    <lineage>
        <taxon>Bacteria</taxon>
        <taxon>Bacillati</taxon>
        <taxon>Cyanobacteriota</taxon>
        <taxon>Cyanophyceae</taxon>
        <taxon>Nostocales</taxon>
        <taxon>Nostocaceae</taxon>
        <taxon>Nostoc</taxon>
    </lineage>
</organism>
<keyword id="KW-0963">Cytoplasm</keyword>
<keyword id="KW-0378">Hydrolase</keyword>
<keyword id="KW-0546">Nucleotide metabolism</keyword>
<keyword id="KW-1185">Reference proteome</keyword>
<evidence type="ECO:0000255" key="1">
    <source>
        <dbReference type="HAMAP-Rule" id="MF_00528"/>
    </source>
</evidence>
<feature type="chain" id="PRO_1000127794" description="Nucleoside triphosphate pyrophosphatase">
    <location>
        <begin position="1"/>
        <end position="197"/>
    </location>
</feature>
<feature type="active site" description="Proton acceptor" evidence="1">
    <location>
        <position position="71"/>
    </location>
</feature>
<accession>B2J6P8</accession>
<gene>
    <name type="ordered locus">Npun_F5518</name>
</gene>
<reference key="1">
    <citation type="journal article" date="2013" name="Plant Physiol.">
        <title>A Nostoc punctiforme Sugar Transporter Necessary to Establish a Cyanobacterium-Plant Symbiosis.</title>
        <authorList>
            <person name="Ekman M."/>
            <person name="Picossi S."/>
            <person name="Campbell E.L."/>
            <person name="Meeks J.C."/>
            <person name="Flores E."/>
        </authorList>
    </citation>
    <scope>NUCLEOTIDE SEQUENCE [LARGE SCALE GENOMIC DNA]</scope>
    <source>
        <strain>ATCC 29133 / PCC 73102</strain>
    </source>
</reference>
<protein>
    <recommendedName>
        <fullName evidence="1">Nucleoside triphosphate pyrophosphatase</fullName>
        <ecNumber evidence="1">3.6.1.9</ecNumber>
    </recommendedName>
    <alternativeName>
        <fullName evidence="1">Nucleotide pyrophosphatase</fullName>
        <shortName evidence="1">Nucleotide PPase</shortName>
    </alternativeName>
</protein>
<dbReference type="EC" id="3.6.1.9" evidence="1"/>
<dbReference type="EMBL" id="CP001037">
    <property type="protein sequence ID" value="ACC83824.1"/>
    <property type="molecule type" value="Genomic_DNA"/>
</dbReference>
<dbReference type="RefSeq" id="WP_012411768.1">
    <property type="nucleotide sequence ID" value="NC_010628.1"/>
</dbReference>
<dbReference type="SMR" id="B2J6P8"/>
<dbReference type="STRING" id="63737.Npun_F5518"/>
<dbReference type="EnsemblBacteria" id="ACC83824">
    <property type="protein sequence ID" value="ACC83824"/>
    <property type="gene ID" value="Npun_F5518"/>
</dbReference>
<dbReference type="KEGG" id="npu:Npun_F5518"/>
<dbReference type="eggNOG" id="COG0424">
    <property type="taxonomic scope" value="Bacteria"/>
</dbReference>
<dbReference type="HOGENOM" id="CLU_040416_1_2_3"/>
<dbReference type="OrthoDB" id="9807767at2"/>
<dbReference type="PhylomeDB" id="B2J6P8"/>
<dbReference type="Proteomes" id="UP000001191">
    <property type="component" value="Chromosome"/>
</dbReference>
<dbReference type="GO" id="GO:0005737">
    <property type="term" value="C:cytoplasm"/>
    <property type="evidence" value="ECO:0007669"/>
    <property type="project" value="UniProtKB-SubCell"/>
</dbReference>
<dbReference type="GO" id="GO:0047429">
    <property type="term" value="F:nucleoside triphosphate diphosphatase activity"/>
    <property type="evidence" value="ECO:0007669"/>
    <property type="project" value="UniProtKB-EC"/>
</dbReference>
<dbReference type="GO" id="GO:0009117">
    <property type="term" value="P:nucleotide metabolic process"/>
    <property type="evidence" value="ECO:0007669"/>
    <property type="project" value="UniProtKB-KW"/>
</dbReference>
<dbReference type="CDD" id="cd00555">
    <property type="entry name" value="Maf"/>
    <property type="match status" value="1"/>
</dbReference>
<dbReference type="Gene3D" id="3.90.950.10">
    <property type="match status" value="1"/>
</dbReference>
<dbReference type="HAMAP" id="MF_00528">
    <property type="entry name" value="Maf"/>
    <property type="match status" value="1"/>
</dbReference>
<dbReference type="InterPro" id="IPR029001">
    <property type="entry name" value="ITPase-like_fam"/>
</dbReference>
<dbReference type="InterPro" id="IPR003697">
    <property type="entry name" value="Maf-like"/>
</dbReference>
<dbReference type="NCBIfam" id="TIGR00172">
    <property type="entry name" value="maf"/>
    <property type="match status" value="1"/>
</dbReference>
<dbReference type="PANTHER" id="PTHR43213">
    <property type="entry name" value="BIFUNCTIONAL DTTP/UTP PYROPHOSPHATASE/METHYLTRANSFERASE PROTEIN-RELATED"/>
    <property type="match status" value="1"/>
</dbReference>
<dbReference type="PANTHER" id="PTHR43213:SF5">
    <property type="entry name" value="BIFUNCTIONAL DTTP_UTP PYROPHOSPHATASE_METHYLTRANSFERASE PROTEIN-RELATED"/>
    <property type="match status" value="1"/>
</dbReference>
<dbReference type="Pfam" id="PF02545">
    <property type="entry name" value="Maf"/>
    <property type="match status" value="1"/>
</dbReference>
<dbReference type="PIRSF" id="PIRSF006305">
    <property type="entry name" value="Maf"/>
    <property type="match status" value="1"/>
</dbReference>
<dbReference type="SUPFAM" id="SSF52972">
    <property type="entry name" value="ITPase-like"/>
    <property type="match status" value="1"/>
</dbReference>
<sequence length="197" mass="21576">MKIPPFVLASASPARRRLLETVGIEPIVRASDFDESQIQLSEPAELVKTLAQCKAETVAPQFESALIMGCDSVLSMNGEIHGKPADTSEAIARWQIMQGNFGDLYTGHALIDLEQNRTIVKSQVTRVYFAQMSDRAILAYVATGEPLKCAGAFAIEGFGSFFVEKIEGCHSNVIGLSLPLLRHILAELGYDVTDFWQ</sequence>